<comment type="function">
    <text>Invasin is a protein that allows enteric bacteria to penetrate cultured mammalian cells. The entry of invasin in the cell is mediated by binding several beta-1 chain integrins.</text>
</comment>
<comment type="subcellular location">
    <subcellularLocation>
        <location>Cell surface</location>
    </subcellularLocation>
</comment>
<comment type="similarity">
    <text evidence="2">Belongs to the intimin/invasin family.</text>
</comment>
<comment type="caution">
    <text evidence="2">It is uncertain whether Met-1, Met-17 or Met-19 is the initiator.</text>
</comment>
<comment type="sequence caution" evidence="2">
    <conflict type="erroneous initiation">
        <sequence resource="EMBL-CDS" id="AAA27632"/>
    </conflict>
</comment>
<comment type="sequence caution" evidence="2">
    <conflict type="erroneous initiation">
        <sequence resource="EMBL-CDS" id="AAA27634"/>
    </conflict>
</comment>
<comment type="sequence caution" evidence="2">
    <conflict type="erroneous initiation">
        <sequence resource="EMBL-CDS" id="AAA27635"/>
    </conflict>
</comment>
<reference key="1">
    <citation type="journal article" date="1987" name="Cell">
        <title>Identification of invasin: a protein that allows enteric bacteria to penetrate cultured mammalian cells.</title>
        <authorList>
            <person name="Isberg R.R."/>
            <person name="Voorhis D.L."/>
            <person name="Falkow S."/>
        </authorList>
    </citation>
    <scope>NUCLEOTIDE SEQUENCE [GENOMIC DNA]</scope>
</reference>
<reference key="2">
    <citation type="journal article" date="2004" name="Proc. Natl. Acad. Sci. U.S.A.">
        <title>Insights into the evolution of Yersinia pestis through whole-genome comparison with Yersinia pseudotuberculosis.</title>
        <authorList>
            <person name="Chain P.S.G."/>
            <person name="Carniel E."/>
            <person name="Larimer F.W."/>
            <person name="Lamerdin J."/>
            <person name="Stoutland P.O."/>
            <person name="Regala W.M."/>
            <person name="Georgescu A.M."/>
            <person name="Vergez L.M."/>
            <person name="Land M.L."/>
            <person name="Motin V.L."/>
            <person name="Brubaker R.R."/>
            <person name="Fowler J."/>
            <person name="Hinnebusch J."/>
            <person name="Marceau M."/>
            <person name="Medigue C."/>
            <person name="Simonet M."/>
            <person name="Chenal-Francisque V."/>
            <person name="Souza B."/>
            <person name="Dacheux D."/>
            <person name="Elliott J.M."/>
            <person name="Derbise A."/>
            <person name="Hauser L.J."/>
            <person name="Garcia E."/>
        </authorList>
    </citation>
    <scope>NUCLEOTIDE SEQUENCE [LARGE SCALE GENOMIC DNA]</scope>
    <source>
        <strain>IP32953</strain>
    </source>
</reference>
<reference key="3">
    <citation type="journal article" date="1990" name="EMBO J.">
        <title>Identification of the integrin binding domain of the Yersinia pseudotuberculosis invasin protein.</title>
        <authorList>
            <person name="Leong J.M."/>
            <person name="Fournier R.S."/>
            <person name="Isberg R.R."/>
        </authorList>
    </citation>
    <scope>DOMAIN INTEGRIN-BINDING</scope>
</reference>
<reference key="4">
    <citation type="journal article" date="1999" name="Science">
        <title>Crystal structure of invasin: a bacterial integrin-binding protein.</title>
        <authorList>
            <person name="Hamburger Z.A."/>
            <person name="Brown M.S."/>
            <person name="Isberg R.R."/>
            <person name="Bjorkman P.J."/>
        </authorList>
    </citation>
    <scope>X-RAY CRYSTALLOGRAPHY (2.3 ANGSTROMS) OF 494-985</scope>
</reference>
<organism>
    <name type="scientific">Yersinia pseudotuberculosis serotype I (strain IP32953)</name>
    <dbReference type="NCBI Taxonomy" id="273123"/>
    <lineage>
        <taxon>Bacteria</taxon>
        <taxon>Pseudomonadati</taxon>
        <taxon>Pseudomonadota</taxon>
        <taxon>Gammaproteobacteria</taxon>
        <taxon>Enterobacterales</taxon>
        <taxon>Yersiniaceae</taxon>
        <taxon>Yersinia</taxon>
    </lineage>
</organism>
<gene>
    <name type="ordered locus">YPTB1668</name>
</gene>
<name>INVA_YERPS</name>
<dbReference type="EMBL" id="M17448">
    <property type="protein sequence ID" value="AAA27633.1"/>
    <property type="molecule type" value="Genomic_DNA"/>
</dbReference>
<dbReference type="EMBL" id="M17448">
    <property type="protein sequence ID" value="AAA27632.1"/>
    <property type="status" value="ALT_INIT"/>
    <property type="molecule type" value="Genomic_DNA"/>
</dbReference>
<dbReference type="EMBL" id="M17448">
    <property type="protein sequence ID" value="AAA27634.1"/>
    <property type="status" value="ALT_INIT"/>
    <property type="molecule type" value="Genomic_DNA"/>
</dbReference>
<dbReference type="EMBL" id="M17448">
    <property type="protein sequence ID" value="AAA27635.1"/>
    <property type="status" value="ALT_INIT"/>
    <property type="molecule type" value="Genomic_DNA"/>
</dbReference>
<dbReference type="EMBL" id="BX936398">
    <property type="protein sequence ID" value="CAH20907.1"/>
    <property type="molecule type" value="Genomic_DNA"/>
</dbReference>
<dbReference type="PIR" id="A29646">
    <property type="entry name" value="A29646"/>
</dbReference>
<dbReference type="PDB" id="1CWV">
    <property type="method" value="X-ray"/>
    <property type="resolution" value="2.30 A"/>
    <property type="chains" value="A=494-983"/>
</dbReference>
<dbReference type="PDB" id="4E1T">
    <property type="method" value="X-ray"/>
    <property type="resolution" value="2.26 A"/>
    <property type="chains" value="A=147-390"/>
</dbReference>
<dbReference type="PDBsum" id="1CWV"/>
<dbReference type="PDBsum" id="4E1T"/>
<dbReference type="SMR" id="P11922"/>
<dbReference type="DrugBank" id="DB04272">
    <property type="generic name" value="Citric acid"/>
</dbReference>
<dbReference type="TCDB" id="1.B.54.1.2">
    <property type="family name" value="the intimin/invasin (int/inv) or autotransporter-3 (at-3) family"/>
</dbReference>
<dbReference type="KEGG" id="yps:YPTB1668"/>
<dbReference type="EvolutionaryTrace" id="P11922"/>
<dbReference type="Proteomes" id="UP000001011">
    <property type="component" value="Chromosome"/>
</dbReference>
<dbReference type="GO" id="GO:0009279">
    <property type="term" value="C:cell outer membrane"/>
    <property type="evidence" value="ECO:0007669"/>
    <property type="project" value="TreeGrafter"/>
</dbReference>
<dbReference type="GO" id="GO:0009986">
    <property type="term" value="C:cell surface"/>
    <property type="evidence" value="ECO:0007669"/>
    <property type="project" value="UniProtKB-SubCell"/>
</dbReference>
<dbReference type="GO" id="GO:0007155">
    <property type="term" value="P:cell adhesion"/>
    <property type="evidence" value="ECO:0007669"/>
    <property type="project" value="InterPro"/>
</dbReference>
<dbReference type="FunFam" id="2.60.40.10:FF:000182">
    <property type="entry name" value="Gamma intimin"/>
    <property type="match status" value="1"/>
</dbReference>
<dbReference type="FunFam" id="2.40.160.160:FF:000001">
    <property type="entry name" value="Intimin-like inverse autotransporter SinH"/>
    <property type="match status" value="1"/>
</dbReference>
<dbReference type="Gene3D" id="2.60.40.1080">
    <property type="match status" value="1"/>
</dbReference>
<dbReference type="Gene3D" id="2.60.40.10">
    <property type="entry name" value="Immunoglobulins"/>
    <property type="match status" value="3"/>
</dbReference>
<dbReference type="Gene3D" id="2.40.160.160">
    <property type="entry name" value="Inverse autotransporter, beta-domain"/>
    <property type="match status" value="1"/>
</dbReference>
<dbReference type="Gene3D" id="3.10.100.10">
    <property type="entry name" value="Mannose-Binding Protein A, subunit A"/>
    <property type="match status" value="1"/>
</dbReference>
<dbReference type="InterPro" id="IPR003344">
    <property type="entry name" value="Big_1_dom"/>
</dbReference>
<dbReference type="InterPro" id="IPR016186">
    <property type="entry name" value="C-type_lectin-like/link_sf"/>
</dbReference>
<dbReference type="InterPro" id="IPR016187">
    <property type="entry name" value="CTDL_fold"/>
</dbReference>
<dbReference type="InterPro" id="IPR024519">
    <property type="entry name" value="IAT_beta"/>
</dbReference>
<dbReference type="InterPro" id="IPR038177">
    <property type="entry name" value="IAT_beta_sf"/>
</dbReference>
<dbReference type="InterPro" id="IPR013783">
    <property type="entry name" value="Ig-like_fold"/>
</dbReference>
<dbReference type="InterPro" id="IPR051715">
    <property type="entry name" value="Intimin-Invasin_domain"/>
</dbReference>
<dbReference type="InterPro" id="IPR003535">
    <property type="entry name" value="Intimin/invasin_bac"/>
</dbReference>
<dbReference type="InterPro" id="IPR013117">
    <property type="entry name" value="Intimin_C"/>
</dbReference>
<dbReference type="InterPro" id="IPR008964">
    <property type="entry name" value="Invasin/intimin_cell_adhesion"/>
</dbReference>
<dbReference type="InterPro" id="IPR048658">
    <property type="entry name" value="Invasin_D4"/>
</dbReference>
<dbReference type="InterPro" id="IPR015217">
    <property type="entry name" value="Invasin_dom_3"/>
</dbReference>
<dbReference type="PANTHER" id="PTHR39576">
    <property type="entry name" value="ATTACHING AND EFFACING PROTEIN HOMOLOG-RELATED-RELATED"/>
    <property type="match status" value="1"/>
</dbReference>
<dbReference type="PANTHER" id="PTHR39576:SF1">
    <property type="entry name" value="INVASIN"/>
    <property type="match status" value="1"/>
</dbReference>
<dbReference type="Pfam" id="PF02369">
    <property type="entry name" value="Big_1"/>
    <property type="match status" value="1"/>
</dbReference>
<dbReference type="Pfam" id="PF11924">
    <property type="entry name" value="IAT_beta"/>
    <property type="match status" value="1"/>
</dbReference>
<dbReference type="Pfam" id="PF07979">
    <property type="entry name" value="Intimin_C"/>
    <property type="match status" value="1"/>
</dbReference>
<dbReference type="Pfam" id="PF09134">
    <property type="entry name" value="Invasin_D3"/>
    <property type="match status" value="2"/>
</dbReference>
<dbReference type="Pfam" id="PF21764">
    <property type="entry name" value="Invasin_D4"/>
    <property type="match status" value="1"/>
</dbReference>
<dbReference type="PRINTS" id="PR01369">
    <property type="entry name" value="INTIMIN"/>
</dbReference>
<dbReference type="SMART" id="SM00634">
    <property type="entry name" value="BID_1"/>
    <property type="match status" value="3"/>
</dbReference>
<dbReference type="SUPFAM" id="SSF56436">
    <property type="entry name" value="C-type lectin-like"/>
    <property type="match status" value="1"/>
</dbReference>
<dbReference type="SUPFAM" id="SSF49373">
    <property type="entry name" value="Invasin/intimin cell-adhesion fragments"/>
    <property type="match status" value="4"/>
</dbReference>
<dbReference type="PROSITE" id="PS51127">
    <property type="entry name" value="BIG1"/>
    <property type="match status" value="2"/>
</dbReference>
<protein>
    <recommendedName>
        <fullName>Invasin</fullName>
    </recommendedName>
</protein>
<accession>P11922</accession>
<accession>Q66BU9</accession>
<evidence type="ECO:0000255" key="1">
    <source>
        <dbReference type="PROSITE-ProRule" id="PRU00445"/>
    </source>
</evidence>
<evidence type="ECO:0000305" key="2"/>
<evidence type="ECO:0007829" key="3">
    <source>
        <dbReference type="PDB" id="1CWV"/>
    </source>
</evidence>
<evidence type="ECO:0007829" key="4">
    <source>
        <dbReference type="PDB" id="4E1T"/>
    </source>
</evidence>
<sequence>MVFQPISEFLLIRNAGMSMYFNKIISFNIISRIVICIFLICGMFMAGASEKYDANAPQQVQPYSVSSSAFENLHPNNEMESSINPFSASDTERNAAIIDRANKEQETEAVNKMISTGARLAASGRASDVAHSMVGDAVNQEIKQWLNRFGTAQVNLNFDKNFSLKESSLDWLAPWYDSASFLFFSQLGIRNKDSRNTLNLGVGIRTLENGWLYGLNTFYDNDLTGHNHRIGLGAEAWTDYLQLAANGYFRLNGWHSSRDFSDYKERPATGGDLRANAYLPALPQLGGKLMYEQYTGERVALFGKDNLQRNPYAVTAGINYTPVPLLTVGVDQRMGKSSKHETQWNLQMNYRLGESFQSQLSPSAVAGTRLLAESRYNLVDRNNNIVLEYQKQQVVKLTLSPATISGLPGQVYQVNAQVQGASAVREIVWSDAELIAAGGTLTPLSTTQFNLVLPPYKRTAQVSRVTDDLTANFYSLSALAVDHQGNRSNSFTLSVTVQQPQLTLTAAVIGDGAPANGKTAITVEFTVADFEGKPLAGQEVVITTNNGALPNKITEKTDANGVARIALTNTTDGVTVVTAEVEGQRQSVDTHFVKGTIAADKSTLAAVPTSIIADGLMASTITLELKDTYGDPQAGANVAFDTTLGNMGVITDHNDGTYSAPLTSTTLGVATVTVKVDGAAFSVPSVTVNFTADPIPDAGRSSFTVSTPDILADGTMSSTLSFVPVDKNGHFISGMQGLSFTQNGVPVSISPITEQPDSYTATVVGNTAGDVTITPQVDTLILSTLQKKISLFPVPTLTGILVNGQNFATDKGFPKTIFKNATFQLQMDNDVANNTQYEWSSSFTPNVSVNDQGQVTITYQTYSEVAVTAKSKKFPSYSVSYRFYPNRWIYDGGTSLVSSLEASRQCQGSDMSAVLESSRATNGTRAPDGTLWGEWGSLTAYSSDWQSGEYWVKKTSTDFETMNMDTGALVQGPAYLAFPLCALAI</sequence>
<keyword id="KW-0002">3D-structure</keyword>
<keyword id="KW-1015">Disulfide bond</keyword>
<keyword id="KW-0677">Repeat</keyword>
<proteinExistence type="evidence at protein level"/>
<feature type="chain" id="PRO_0000211831" description="Invasin">
    <location>
        <begin position="1"/>
        <end position="985"/>
    </location>
</feature>
<feature type="topological domain" description="Extracellular">
    <location>
        <begin position="494"/>
        <end position="985"/>
    </location>
</feature>
<feature type="domain" description="Big-1 1" evidence="1">
    <location>
        <begin position="503"/>
        <end position="594"/>
    </location>
</feature>
<feature type="domain" description="Big-1 2" evidence="1">
    <location>
        <begin position="601"/>
        <end position="691"/>
    </location>
</feature>
<feature type="region of interest" description="D1">
    <location>
        <begin position="494"/>
        <end position="594"/>
    </location>
</feature>
<feature type="region of interest" description="D2">
    <location>
        <begin position="595"/>
        <end position="694"/>
    </location>
</feature>
<feature type="region of interest" description="D3">
    <location>
        <begin position="695"/>
        <end position="794"/>
    </location>
</feature>
<feature type="region of interest" description="Integrin-binding">
    <location>
        <begin position="795"/>
        <end position="985"/>
    </location>
</feature>
<feature type="region of interest" description="D4">
    <location>
        <begin position="795"/>
        <end position="886"/>
    </location>
</feature>
<feature type="region of interest" description="D5">
    <location>
        <begin position="887"/>
        <end position="985"/>
    </location>
</feature>
<feature type="disulfide bond">
    <location>
        <begin position="906"/>
        <end position="981"/>
    </location>
</feature>
<feature type="sequence conflict" description="In Ref. 1; AAA27633/AAA27632." evidence="2" ref="1">
    <original>TA</original>
    <variation>SV</variation>
    <location>
        <begin position="767"/>
        <end position="768"/>
    </location>
</feature>
<feature type="sequence conflict" description="In Ref. 1; AAA27633/AAA27632." evidence="2" ref="1">
    <original>T</original>
    <variation>R</variation>
    <location>
        <position position="894"/>
    </location>
</feature>
<feature type="sequence conflict" description="In Ref. 1; AAA27633/AAA27632." evidence="2" ref="1">
    <original>VQ</original>
    <variation>QP</variation>
    <location>
        <begin position="970"/>
        <end position="971"/>
    </location>
</feature>
<feature type="sequence conflict" description="In Ref. 1; AAA27633/AAA27632." evidence="2" ref="1">
    <original>A</original>
    <variation>S</variation>
    <location>
        <position position="984"/>
    </location>
</feature>
<feature type="strand" evidence="4">
    <location>
        <begin position="151"/>
        <end position="158"/>
    </location>
</feature>
<feature type="strand" evidence="4">
    <location>
        <begin position="164"/>
        <end position="177"/>
    </location>
</feature>
<feature type="strand" evidence="4">
    <location>
        <begin position="179"/>
        <end position="192"/>
    </location>
</feature>
<feature type="strand" evidence="4">
    <location>
        <begin position="195"/>
        <end position="208"/>
    </location>
</feature>
<feature type="strand" evidence="4">
    <location>
        <begin position="211"/>
        <end position="222"/>
    </location>
</feature>
<feature type="turn" evidence="4">
    <location>
        <begin position="223"/>
        <end position="226"/>
    </location>
</feature>
<feature type="strand" evidence="4">
    <location>
        <begin position="227"/>
        <end position="238"/>
    </location>
</feature>
<feature type="strand" evidence="4">
    <location>
        <begin position="241"/>
        <end position="250"/>
    </location>
</feature>
<feature type="strand" evidence="4">
    <location>
        <begin position="264"/>
        <end position="267"/>
    </location>
</feature>
<feature type="strand" evidence="4">
    <location>
        <begin position="270"/>
        <end position="279"/>
    </location>
</feature>
<feature type="strand" evidence="4">
    <location>
        <begin position="282"/>
        <end position="294"/>
    </location>
</feature>
<feature type="strand" evidence="4">
    <location>
        <begin position="296"/>
        <end position="299"/>
    </location>
</feature>
<feature type="strand" evidence="4">
    <location>
        <begin position="308"/>
        <end position="310"/>
    </location>
</feature>
<feature type="strand" evidence="4">
    <location>
        <begin position="312"/>
        <end position="323"/>
    </location>
</feature>
<feature type="strand" evidence="4">
    <location>
        <begin position="326"/>
        <end position="334"/>
    </location>
</feature>
<feature type="helix" evidence="4">
    <location>
        <begin position="336"/>
        <end position="338"/>
    </location>
</feature>
<feature type="strand" evidence="4">
    <location>
        <begin position="340"/>
        <end position="351"/>
    </location>
</feature>
<feature type="helix" evidence="4">
    <location>
        <begin position="356"/>
        <end position="359"/>
    </location>
</feature>
<feature type="helix" evidence="4">
    <location>
        <begin position="362"/>
        <end position="364"/>
    </location>
</feature>
<feature type="helix" evidence="4">
    <location>
        <begin position="365"/>
        <end position="368"/>
    </location>
</feature>
<feature type="helix" evidence="4">
    <location>
        <begin position="371"/>
        <end position="374"/>
    </location>
</feature>
<feature type="strand" evidence="4">
    <location>
        <begin position="387"/>
        <end position="390"/>
    </location>
</feature>
<feature type="strand" evidence="3">
    <location>
        <begin position="503"/>
        <end position="510"/>
    </location>
</feature>
<feature type="strand" evidence="3">
    <location>
        <begin position="512"/>
        <end position="519"/>
    </location>
</feature>
<feature type="strand" evidence="3">
    <location>
        <begin position="521"/>
        <end position="528"/>
    </location>
</feature>
<feature type="strand" evidence="3">
    <location>
        <begin position="539"/>
        <end position="543"/>
    </location>
</feature>
<feature type="strand" evidence="3">
    <location>
        <begin position="552"/>
        <end position="556"/>
    </location>
</feature>
<feature type="strand" evidence="3">
    <location>
        <begin position="561"/>
        <end position="568"/>
    </location>
</feature>
<feature type="strand" evidence="3">
    <location>
        <begin position="573"/>
        <end position="581"/>
    </location>
</feature>
<feature type="strand" evidence="3">
    <location>
        <begin position="584"/>
        <end position="593"/>
    </location>
</feature>
<feature type="helix" evidence="3">
    <location>
        <begin position="599"/>
        <end position="601"/>
    </location>
</feature>
<feature type="strand" evidence="3">
    <location>
        <begin position="603"/>
        <end position="613"/>
    </location>
</feature>
<feature type="strand" evidence="3">
    <location>
        <begin position="619"/>
        <end position="624"/>
    </location>
</feature>
<feature type="strand" evidence="3">
    <location>
        <begin position="638"/>
        <end position="647"/>
    </location>
</feature>
<feature type="strand" evidence="3">
    <location>
        <begin position="654"/>
        <end position="663"/>
    </location>
</feature>
<feature type="strand" evidence="3">
    <location>
        <begin position="668"/>
        <end position="676"/>
    </location>
</feature>
<feature type="strand" evidence="3">
    <location>
        <begin position="679"/>
        <end position="691"/>
    </location>
</feature>
<feature type="turn" evidence="3">
    <location>
        <begin position="698"/>
        <end position="700"/>
    </location>
</feature>
<feature type="strand" evidence="3">
    <location>
        <begin position="702"/>
        <end position="706"/>
    </location>
</feature>
<feature type="strand" evidence="3">
    <location>
        <begin position="708"/>
        <end position="711"/>
    </location>
</feature>
<feature type="strand" evidence="3">
    <location>
        <begin position="718"/>
        <end position="723"/>
    </location>
</feature>
<feature type="strand" evidence="3">
    <location>
        <begin position="737"/>
        <end position="745"/>
    </location>
</feature>
<feature type="strand" evidence="3">
    <location>
        <begin position="759"/>
        <end position="764"/>
    </location>
</feature>
<feature type="strand" evidence="3">
    <location>
        <begin position="769"/>
        <end position="777"/>
    </location>
</feature>
<feature type="helix" evidence="3">
    <location>
        <begin position="783"/>
        <end position="785"/>
    </location>
</feature>
<feature type="strand" evidence="3">
    <location>
        <begin position="787"/>
        <end position="792"/>
    </location>
</feature>
<feature type="strand" evidence="3">
    <location>
        <begin position="797"/>
        <end position="802"/>
    </location>
</feature>
<feature type="strand" evidence="3">
    <location>
        <begin position="805"/>
        <end position="807"/>
    </location>
</feature>
<feature type="strand" evidence="3">
    <location>
        <begin position="815"/>
        <end position="818"/>
    </location>
</feature>
<feature type="strand" evidence="3">
    <location>
        <begin position="822"/>
        <end position="827"/>
    </location>
</feature>
<feature type="helix" evidence="3">
    <location>
        <begin position="831"/>
        <end position="836"/>
    </location>
</feature>
<feature type="strand" evidence="3">
    <location>
        <begin position="837"/>
        <end position="843"/>
    </location>
</feature>
<feature type="turn" evidence="3">
    <location>
        <begin position="844"/>
        <end position="846"/>
    </location>
</feature>
<feature type="strand" evidence="3">
    <location>
        <begin position="847"/>
        <end position="849"/>
    </location>
</feature>
<feature type="strand" evidence="3">
    <location>
        <begin position="854"/>
        <end position="857"/>
    </location>
</feature>
<feature type="strand" evidence="3">
    <location>
        <begin position="865"/>
        <end position="874"/>
    </location>
</feature>
<feature type="strand" evidence="3">
    <location>
        <begin position="878"/>
        <end position="883"/>
    </location>
</feature>
<feature type="strand" evidence="3">
    <location>
        <begin position="887"/>
        <end position="892"/>
    </location>
</feature>
<feature type="helix" evidence="3">
    <location>
        <begin position="899"/>
        <end position="905"/>
    </location>
</feature>
<feature type="strand" evidence="3">
    <location>
        <begin position="912"/>
        <end position="914"/>
    </location>
</feature>
<feature type="helix" evidence="3">
    <location>
        <begin position="917"/>
        <end position="920"/>
    </location>
</feature>
<feature type="strand" evidence="3">
    <location>
        <begin position="926"/>
        <end position="929"/>
    </location>
</feature>
<feature type="helix" evidence="3">
    <location>
        <begin position="931"/>
        <end position="935"/>
    </location>
</feature>
<feature type="helix" evidence="3">
    <location>
        <begin position="938"/>
        <end position="940"/>
    </location>
</feature>
<feature type="strand" evidence="3">
    <location>
        <begin position="947"/>
        <end position="957"/>
    </location>
</feature>
<feature type="strand" evidence="3">
    <location>
        <begin position="959"/>
        <end position="963"/>
    </location>
</feature>
<feature type="turn" evidence="3">
    <location>
        <begin position="964"/>
        <end position="966"/>
    </location>
</feature>
<feature type="strand" evidence="3">
    <location>
        <begin position="977"/>
        <end position="984"/>
    </location>
</feature>